<evidence type="ECO:0000255" key="1">
    <source>
        <dbReference type="HAMAP-Rule" id="MF_01815"/>
    </source>
</evidence>
<sequence>MIRAAIKGSGSALPRKVVTNEELAARVDTSDEWIVERTGIRQRYIAGADEFTSTLAMEASRKALEAAGITPETIDLIVLATATPDNTFPATATKVQEALGCNGCIAFDVQAVCSGFLYALATADSLLKTGMAKRALVIGAETFSRILDWEDRTTCVLFGDGAGAVVLEAAEGDTEAPGILASRLHADGAQHDLLYVDGGPSTTQTVGHLRMRGREVFRHAVVNLADVLKEVLDDAGVSASDIDWVVPHQANARILDATARKLGLPMEKIVVTVDRHANTSAASVPLAFDTAVRDGRIKPGDLVMFEAMGGGFTWGASLVRY</sequence>
<protein>
    <recommendedName>
        <fullName evidence="1">Beta-ketoacyl-[acyl-carrier-protein] synthase III</fullName>
        <shortName evidence="1">Beta-ketoacyl-ACP synthase III</shortName>
        <shortName evidence="1">KAS III</shortName>
        <ecNumber evidence="1">2.3.1.180</ecNumber>
    </recommendedName>
    <alternativeName>
        <fullName evidence="1">3-oxoacyl-[acyl-carrier-protein] synthase 3</fullName>
    </alternativeName>
    <alternativeName>
        <fullName evidence="1">3-oxoacyl-[acyl-carrier-protein] synthase III</fullName>
    </alternativeName>
</protein>
<keyword id="KW-0012">Acyltransferase</keyword>
<keyword id="KW-0963">Cytoplasm</keyword>
<keyword id="KW-0275">Fatty acid biosynthesis</keyword>
<keyword id="KW-0276">Fatty acid metabolism</keyword>
<keyword id="KW-0444">Lipid biosynthesis</keyword>
<keyword id="KW-0443">Lipid metabolism</keyword>
<keyword id="KW-0511">Multifunctional enzyme</keyword>
<keyword id="KW-1185">Reference proteome</keyword>
<keyword id="KW-0808">Transferase</keyword>
<dbReference type="EC" id="2.3.1.180" evidence="1"/>
<dbReference type="EMBL" id="CP000157">
    <property type="protein sequence ID" value="ABC63816.1"/>
    <property type="molecule type" value="Genomic_DNA"/>
</dbReference>
<dbReference type="RefSeq" id="WP_011414646.1">
    <property type="nucleotide sequence ID" value="NC_007722.1"/>
</dbReference>
<dbReference type="SMR" id="Q2N925"/>
<dbReference type="STRING" id="314225.ELI_08620"/>
<dbReference type="KEGG" id="eli:ELI_08620"/>
<dbReference type="eggNOG" id="COG0332">
    <property type="taxonomic scope" value="Bacteria"/>
</dbReference>
<dbReference type="HOGENOM" id="CLU_039592_3_1_5"/>
<dbReference type="OrthoDB" id="9815506at2"/>
<dbReference type="UniPathway" id="UPA00094"/>
<dbReference type="Proteomes" id="UP000008808">
    <property type="component" value="Chromosome"/>
</dbReference>
<dbReference type="GO" id="GO:0005737">
    <property type="term" value="C:cytoplasm"/>
    <property type="evidence" value="ECO:0007669"/>
    <property type="project" value="UniProtKB-SubCell"/>
</dbReference>
<dbReference type="GO" id="GO:0004315">
    <property type="term" value="F:3-oxoacyl-[acyl-carrier-protein] synthase activity"/>
    <property type="evidence" value="ECO:0007669"/>
    <property type="project" value="InterPro"/>
</dbReference>
<dbReference type="GO" id="GO:0033818">
    <property type="term" value="F:beta-ketoacyl-acyl-carrier-protein synthase III activity"/>
    <property type="evidence" value="ECO:0007669"/>
    <property type="project" value="UniProtKB-UniRule"/>
</dbReference>
<dbReference type="GO" id="GO:0006633">
    <property type="term" value="P:fatty acid biosynthetic process"/>
    <property type="evidence" value="ECO:0007669"/>
    <property type="project" value="UniProtKB-UniRule"/>
</dbReference>
<dbReference type="GO" id="GO:0044550">
    <property type="term" value="P:secondary metabolite biosynthetic process"/>
    <property type="evidence" value="ECO:0007669"/>
    <property type="project" value="TreeGrafter"/>
</dbReference>
<dbReference type="CDD" id="cd00830">
    <property type="entry name" value="KAS_III"/>
    <property type="match status" value="1"/>
</dbReference>
<dbReference type="FunFam" id="3.40.47.10:FF:000004">
    <property type="entry name" value="3-oxoacyl-[acyl-carrier-protein] synthase 3"/>
    <property type="match status" value="1"/>
</dbReference>
<dbReference type="Gene3D" id="3.40.47.10">
    <property type="match status" value="1"/>
</dbReference>
<dbReference type="HAMAP" id="MF_01815">
    <property type="entry name" value="FabH"/>
    <property type="match status" value="1"/>
</dbReference>
<dbReference type="InterPro" id="IPR013747">
    <property type="entry name" value="ACP_syn_III_C"/>
</dbReference>
<dbReference type="InterPro" id="IPR013751">
    <property type="entry name" value="ACP_syn_III_N"/>
</dbReference>
<dbReference type="InterPro" id="IPR004655">
    <property type="entry name" value="FabH"/>
</dbReference>
<dbReference type="InterPro" id="IPR016039">
    <property type="entry name" value="Thiolase-like"/>
</dbReference>
<dbReference type="NCBIfam" id="TIGR00747">
    <property type="entry name" value="fabH"/>
    <property type="match status" value="1"/>
</dbReference>
<dbReference type="NCBIfam" id="NF006829">
    <property type="entry name" value="PRK09352.1"/>
    <property type="match status" value="1"/>
</dbReference>
<dbReference type="PANTHER" id="PTHR34069">
    <property type="entry name" value="3-OXOACYL-[ACYL-CARRIER-PROTEIN] SYNTHASE 3"/>
    <property type="match status" value="1"/>
</dbReference>
<dbReference type="PANTHER" id="PTHR34069:SF2">
    <property type="entry name" value="BETA-KETOACYL-[ACYL-CARRIER-PROTEIN] SYNTHASE III"/>
    <property type="match status" value="1"/>
</dbReference>
<dbReference type="Pfam" id="PF08545">
    <property type="entry name" value="ACP_syn_III"/>
    <property type="match status" value="1"/>
</dbReference>
<dbReference type="Pfam" id="PF08541">
    <property type="entry name" value="ACP_syn_III_C"/>
    <property type="match status" value="1"/>
</dbReference>
<dbReference type="SUPFAM" id="SSF53901">
    <property type="entry name" value="Thiolase-like"/>
    <property type="match status" value="1"/>
</dbReference>
<name>FABH_ERYLH</name>
<gene>
    <name evidence="1" type="primary">fabH</name>
    <name type="ordered locus">ELI_08620</name>
</gene>
<feature type="chain" id="PRO_1000187867" description="Beta-ketoacyl-[acyl-carrier-protein] synthase III">
    <location>
        <begin position="1"/>
        <end position="321"/>
    </location>
</feature>
<feature type="region of interest" description="ACP-binding" evidence="1">
    <location>
        <begin position="249"/>
        <end position="253"/>
    </location>
</feature>
<feature type="active site" evidence="1">
    <location>
        <position position="113"/>
    </location>
</feature>
<feature type="active site" evidence="1">
    <location>
        <position position="248"/>
    </location>
</feature>
<feature type="active site" evidence="1">
    <location>
        <position position="278"/>
    </location>
</feature>
<proteinExistence type="inferred from homology"/>
<comment type="function">
    <text evidence="1">Catalyzes the condensation reaction of fatty acid synthesis by the addition to an acyl acceptor of two carbons from malonyl-ACP. Catalyzes the first condensation reaction which initiates fatty acid synthesis and may therefore play a role in governing the total rate of fatty acid production. Possesses both acetoacetyl-ACP synthase and acetyl transacylase activities. Its substrate specificity determines the biosynthesis of branched-chain and/or straight-chain of fatty acids.</text>
</comment>
<comment type="catalytic activity">
    <reaction evidence="1">
        <text>malonyl-[ACP] + acetyl-CoA + H(+) = 3-oxobutanoyl-[ACP] + CO2 + CoA</text>
        <dbReference type="Rhea" id="RHEA:12080"/>
        <dbReference type="Rhea" id="RHEA-COMP:9623"/>
        <dbReference type="Rhea" id="RHEA-COMP:9625"/>
        <dbReference type="ChEBI" id="CHEBI:15378"/>
        <dbReference type="ChEBI" id="CHEBI:16526"/>
        <dbReference type="ChEBI" id="CHEBI:57287"/>
        <dbReference type="ChEBI" id="CHEBI:57288"/>
        <dbReference type="ChEBI" id="CHEBI:78449"/>
        <dbReference type="ChEBI" id="CHEBI:78450"/>
        <dbReference type="EC" id="2.3.1.180"/>
    </reaction>
</comment>
<comment type="pathway">
    <text evidence="1">Lipid metabolism; fatty acid biosynthesis.</text>
</comment>
<comment type="subunit">
    <text evidence="1">Homodimer.</text>
</comment>
<comment type="subcellular location">
    <subcellularLocation>
        <location evidence="1">Cytoplasm</location>
    </subcellularLocation>
</comment>
<comment type="domain">
    <text evidence="1">The last Arg residue of the ACP-binding site is essential for the weak association between ACP/AcpP and FabH.</text>
</comment>
<comment type="similarity">
    <text evidence="1">Belongs to the thiolase-like superfamily. FabH family.</text>
</comment>
<accession>Q2N925</accession>
<reference key="1">
    <citation type="journal article" date="2009" name="J. Bacteriol.">
        <title>Complete genome sequence of Erythrobacter litoralis HTCC2594.</title>
        <authorList>
            <person name="Oh H.M."/>
            <person name="Giovannoni S.J."/>
            <person name="Ferriera S."/>
            <person name="Johnson J."/>
            <person name="Cho J.C."/>
        </authorList>
    </citation>
    <scope>NUCLEOTIDE SEQUENCE [LARGE SCALE GENOMIC DNA]</scope>
    <source>
        <strain>HTCC2594</strain>
    </source>
</reference>
<organism>
    <name type="scientific">Erythrobacter litoralis (strain HTCC2594)</name>
    <dbReference type="NCBI Taxonomy" id="314225"/>
    <lineage>
        <taxon>Bacteria</taxon>
        <taxon>Pseudomonadati</taxon>
        <taxon>Pseudomonadota</taxon>
        <taxon>Alphaproteobacteria</taxon>
        <taxon>Sphingomonadales</taxon>
        <taxon>Erythrobacteraceae</taxon>
        <taxon>Erythrobacter/Porphyrobacter group</taxon>
        <taxon>Erythrobacter</taxon>
    </lineage>
</organism>